<sequence length="81" mass="8872">MSHAVKIYDTCIGCTQCVRACPLDVLEMVPWDGCKASQIASSPRTEDCVGCKRCETACPTDFLSIRVYLGDETTRSMGLAY</sequence>
<accession>Q46IK4</accession>
<organism>
    <name type="scientific">Prochlorococcus marinus (strain NATL2A)</name>
    <dbReference type="NCBI Taxonomy" id="59920"/>
    <lineage>
        <taxon>Bacteria</taxon>
        <taxon>Bacillati</taxon>
        <taxon>Cyanobacteriota</taxon>
        <taxon>Cyanophyceae</taxon>
        <taxon>Synechococcales</taxon>
        <taxon>Prochlorococcaceae</taxon>
        <taxon>Prochlorococcus</taxon>
    </lineage>
</organism>
<feature type="initiator methionine" description="Removed" evidence="1">
    <location>
        <position position="1"/>
    </location>
</feature>
<feature type="chain" id="PRO_0000292103" description="Photosystem I iron-sulfur center">
    <location>
        <begin position="2"/>
        <end position="81"/>
    </location>
</feature>
<feature type="domain" description="4Fe-4S ferredoxin-type 1" evidence="2">
    <location>
        <begin position="2"/>
        <end position="31"/>
    </location>
</feature>
<feature type="domain" description="4Fe-4S ferredoxin-type 2" evidence="2">
    <location>
        <begin position="39"/>
        <end position="68"/>
    </location>
</feature>
<feature type="binding site" evidence="2">
    <location>
        <position position="11"/>
    </location>
    <ligand>
        <name>[4Fe-4S] cluster</name>
        <dbReference type="ChEBI" id="CHEBI:49883"/>
        <label>1</label>
    </ligand>
</feature>
<feature type="binding site" evidence="2">
    <location>
        <position position="14"/>
    </location>
    <ligand>
        <name>[4Fe-4S] cluster</name>
        <dbReference type="ChEBI" id="CHEBI:49883"/>
        <label>1</label>
    </ligand>
</feature>
<feature type="binding site" evidence="2">
    <location>
        <position position="17"/>
    </location>
    <ligand>
        <name>[4Fe-4S] cluster</name>
        <dbReference type="ChEBI" id="CHEBI:49883"/>
        <label>1</label>
    </ligand>
</feature>
<feature type="binding site" evidence="2">
    <location>
        <position position="21"/>
    </location>
    <ligand>
        <name>[4Fe-4S] cluster</name>
        <dbReference type="ChEBI" id="CHEBI:49883"/>
        <label>2</label>
    </ligand>
</feature>
<feature type="binding site" evidence="2">
    <location>
        <position position="48"/>
    </location>
    <ligand>
        <name>[4Fe-4S] cluster</name>
        <dbReference type="ChEBI" id="CHEBI:49883"/>
        <label>2</label>
    </ligand>
</feature>
<feature type="binding site" evidence="2">
    <location>
        <position position="51"/>
    </location>
    <ligand>
        <name>[4Fe-4S] cluster</name>
        <dbReference type="ChEBI" id="CHEBI:49883"/>
        <label>2</label>
    </ligand>
</feature>
<feature type="binding site" evidence="2">
    <location>
        <position position="54"/>
    </location>
    <ligand>
        <name>[4Fe-4S] cluster</name>
        <dbReference type="ChEBI" id="CHEBI:49883"/>
        <label>2</label>
    </ligand>
</feature>
<feature type="binding site" evidence="2">
    <location>
        <position position="58"/>
    </location>
    <ligand>
        <name>[4Fe-4S] cluster</name>
        <dbReference type="ChEBI" id="CHEBI:49883"/>
        <label>1</label>
    </ligand>
</feature>
<evidence type="ECO:0000250" key="1"/>
<evidence type="ECO:0000255" key="2">
    <source>
        <dbReference type="HAMAP-Rule" id="MF_01303"/>
    </source>
</evidence>
<keyword id="KW-0004">4Fe-4S</keyword>
<keyword id="KW-0249">Electron transport</keyword>
<keyword id="KW-0408">Iron</keyword>
<keyword id="KW-0411">Iron-sulfur</keyword>
<keyword id="KW-0472">Membrane</keyword>
<keyword id="KW-0479">Metal-binding</keyword>
<keyword id="KW-0560">Oxidoreductase</keyword>
<keyword id="KW-0602">Photosynthesis</keyword>
<keyword id="KW-0603">Photosystem I</keyword>
<keyword id="KW-1185">Reference proteome</keyword>
<keyword id="KW-0677">Repeat</keyword>
<keyword id="KW-0793">Thylakoid</keyword>
<keyword id="KW-0813">Transport</keyword>
<proteinExistence type="inferred from homology"/>
<protein>
    <recommendedName>
        <fullName evidence="2">Photosystem I iron-sulfur center</fullName>
        <ecNumber evidence="2">1.97.1.12</ecNumber>
    </recommendedName>
    <alternativeName>
        <fullName evidence="2">9 kDa polypeptide</fullName>
    </alternativeName>
    <alternativeName>
        <fullName evidence="2">PSI-C</fullName>
    </alternativeName>
    <alternativeName>
        <fullName evidence="2">Photosystem I subunit VII</fullName>
    </alternativeName>
    <alternativeName>
        <fullName evidence="2">PsaC</fullName>
    </alternativeName>
</protein>
<comment type="function">
    <text evidence="2">Apoprotein for the two 4Fe-4S centers FA and FB of photosystem I (PSI); essential for photochemical activity. FB is the terminal electron acceptor of PSI, donating electrons to ferredoxin. The C-terminus interacts with PsaA/B/D and helps assemble the protein into the PSI complex. Required for binding of PsaD and PsaE to PSI. PSI is a plastocyanin/cytochrome c6-ferredoxin oxidoreductase, converting photonic excitation into a charge separation, which transfers an electron from the donor P700 chlorophyll pair to the spectroscopically characterized acceptors A0, A1, FX, FA and FB in turn.</text>
</comment>
<comment type="catalytic activity">
    <reaction evidence="2">
        <text>reduced [plastocyanin] + hnu + oxidized [2Fe-2S]-[ferredoxin] = oxidized [plastocyanin] + reduced [2Fe-2S]-[ferredoxin]</text>
        <dbReference type="Rhea" id="RHEA:30407"/>
        <dbReference type="Rhea" id="RHEA-COMP:10000"/>
        <dbReference type="Rhea" id="RHEA-COMP:10001"/>
        <dbReference type="Rhea" id="RHEA-COMP:10039"/>
        <dbReference type="Rhea" id="RHEA-COMP:10040"/>
        <dbReference type="ChEBI" id="CHEBI:29036"/>
        <dbReference type="ChEBI" id="CHEBI:30212"/>
        <dbReference type="ChEBI" id="CHEBI:33737"/>
        <dbReference type="ChEBI" id="CHEBI:33738"/>
        <dbReference type="ChEBI" id="CHEBI:49552"/>
        <dbReference type="EC" id="1.97.1.12"/>
    </reaction>
</comment>
<comment type="cofactor">
    <cofactor evidence="2">
        <name>[4Fe-4S] cluster</name>
        <dbReference type="ChEBI" id="CHEBI:49883"/>
    </cofactor>
    <text evidence="2">Binds 2 [4Fe-4S] clusters. Cluster 2 is most probably the spectroscopically characterized electron acceptor FA and cluster 1 is most probably FB.</text>
</comment>
<comment type="subunit">
    <text evidence="2">The cyanobacterial PSI reaction center is composed of one copy each of PsaA,B,C,D,E,F,I,J,K,L,M and X, and forms trimeric complexes.</text>
</comment>
<comment type="subcellular location">
    <subcellularLocation>
        <location evidence="2">Cellular thylakoid membrane</location>
        <topology evidence="2">Peripheral membrane protein</topology>
        <orientation evidence="2">Cytoplasmic side</orientation>
    </subcellularLocation>
</comment>
<name>PSAC_PROMT</name>
<gene>
    <name evidence="2" type="primary">psaC</name>
    <name type="ordered locus">PMN2A_1184</name>
</gene>
<reference key="1">
    <citation type="journal article" date="2007" name="PLoS Genet.">
        <title>Patterns and implications of gene gain and loss in the evolution of Prochlorococcus.</title>
        <authorList>
            <person name="Kettler G.C."/>
            <person name="Martiny A.C."/>
            <person name="Huang K."/>
            <person name="Zucker J."/>
            <person name="Coleman M.L."/>
            <person name="Rodrigue S."/>
            <person name="Chen F."/>
            <person name="Lapidus A."/>
            <person name="Ferriera S."/>
            <person name="Johnson J."/>
            <person name="Steglich C."/>
            <person name="Church G.M."/>
            <person name="Richardson P."/>
            <person name="Chisholm S.W."/>
        </authorList>
    </citation>
    <scope>NUCLEOTIDE SEQUENCE [LARGE SCALE GENOMIC DNA]</scope>
    <source>
        <strain>NATL2A</strain>
    </source>
</reference>
<dbReference type="EC" id="1.97.1.12" evidence="2"/>
<dbReference type="EMBL" id="CP000095">
    <property type="protein sequence ID" value="AAZ58674.1"/>
    <property type="molecule type" value="Genomic_DNA"/>
</dbReference>
<dbReference type="RefSeq" id="WP_011295528.1">
    <property type="nucleotide sequence ID" value="NC_007335.2"/>
</dbReference>
<dbReference type="SMR" id="Q46IK4"/>
<dbReference type="STRING" id="59920.PMN2A_1184"/>
<dbReference type="KEGG" id="pmn:PMN2A_1184"/>
<dbReference type="HOGENOM" id="CLU_139698_8_0_3"/>
<dbReference type="OrthoDB" id="9804603at2"/>
<dbReference type="PhylomeDB" id="Q46IK4"/>
<dbReference type="Proteomes" id="UP000002535">
    <property type="component" value="Chromosome"/>
</dbReference>
<dbReference type="GO" id="GO:0009522">
    <property type="term" value="C:photosystem I"/>
    <property type="evidence" value="ECO:0007669"/>
    <property type="project" value="UniProtKB-KW"/>
</dbReference>
<dbReference type="GO" id="GO:0031676">
    <property type="term" value="C:plasma membrane-derived thylakoid membrane"/>
    <property type="evidence" value="ECO:0007669"/>
    <property type="project" value="UniProtKB-SubCell"/>
</dbReference>
<dbReference type="GO" id="GO:0051539">
    <property type="term" value="F:4 iron, 4 sulfur cluster binding"/>
    <property type="evidence" value="ECO:0007669"/>
    <property type="project" value="UniProtKB-KW"/>
</dbReference>
<dbReference type="GO" id="GO:0009055">
    <property type="term" value="F:electron transfer activity"/>
    <property type="evidence" value="ECO:0007669"/>
    <property type="project" value="UniProtKB-UniRule"/>
</dbReference>
<dbReference type="GO" id="GO:0046872">
    <property type="term" value="F:metal ion binding"/>
    <property type="evidence" value="ECO:0007669"/>
    <property type="project" value="UniProtKB-KW"/>
</dbReference>
<dbReference type="GO" id="GO:0016491">
    <property type="term" value="F:oxidoreductase activity"/>
    <property type="evidence" value="ECO:0007669"/>
    <property type="project" value="UniProtKB-KW"/>
</dbReference>
<dbReference type="GO" id="GO:0009773">
    <property type="term" value="P:photosynthetic electron transport in photosystem I"/>
    <property type="evidence" value="ECO:0007669"/>
    <property type="project" value="InterPro"/>
</dbReference>
<dbReference type="FunFam" id="3.30.70.20:FF:000001">
    <property type="entry name" value="Photosystem I iron-sulfur center"/>
    <property type="match status" value="1"/>
</dbReference>
<dbReference type="Gene3D" id="3.30.70.20">
    <property type="match status" value="1"/>
</dbReference>
<dbReference type="HAMAP" id="MF_01303">
    <property type="entry name" value="PSI_PsaC"/>
    <property type="match status" value="1"/>
</dbReference>
<dbReference type="InterPro" id="IPR017896">
    <property type="entry name" value="4Fe4S_Fe-S-bd"/>
</dbReference>
<dbReference type="InterPro" id="IPR017900">
    <property type="entry name" value="4Fe4S_Fe_S_CS"/>
</dbReference>
<dbReference type="InterPro" id="IPR050157">
    <property type="entry name" value="PSI_iron-sulfur_center"/>
</dbReference>
<dbReference type="InterPro" id="IPR017491">
    <property type="entry name" value="PSI_PsaC"/>
</dbReference>
<dbReference type="NCBIfam" id="TIGR03048">
    <property type="entry name" value="PS_I_psaC"/>
    <property type="match status" value="1"/>
</dbReference>
<dbReference type="PANTHER" id="PTHR24960:SF79">
    <property type="entry name" value="PHOTOSYSTEM I IRON-SULFUR CENTER"/>
    <property type="match status" value="1"/>
</dbReference>
<dbReference type="PANTHER" id="PTHR24960">
    <property type="entry name" value="PHOTOSYSTEM I IRON-SULFUR CENTER-RELATED"/>
    <property type="match status" value="1"/>
</dbReference>
<dbReference type="Pfam" id="PF12838">
    <property type="entry name" value="Fer4_7"/>
    <property type="match status" value="1"/>
</dbReference>
<dbReference type="SUPFAM" id="SSF54862">
    <property type="entry name" value="4Fe-4S ferredoxins"/>
    <property type="match status" value="1"/>
</dbReference>
<dbReference type="PROSITE" id="PS00198">
    <property type="entry name" value="4FE4S_FER_1"/>
    <property type="match status" value="2"/>
</dbReference>
<dbReference type="PROSITE" id="PS51379">
    <property type="entry name" value="4FE4S_FER_2"/>
    <property type="match status" value="2"/>
</dbReference>